<dbReference type="EMBL" id="AF034968">
    <property type="protein sequence ID" value="AAD09169.1"/>
    <property type="molecule type" value="Genomic_DNA"/>
</dbReference>
<dbReference type="RefSeq" id="YP_009004010.1">
    <property type="nucleotide sequence ID" value="NC_023542.1"/>
</dbReference>
<dbReference type="SMR" id="O47420"/>
<dbReference type="GeneID" id="18490621"/>
<dbReference type="CTD" id="4519"/>
<dbReference type="GO" id="GO:0005743">
    <property type="term" value="C:mitochondrial inner membrane"/>
    <property type="evidence" value="ECO:0007669"/>
    <property type="project" value="UniProtKB-SubCell"/>
</dbReference>
<dbReference type="GO" id="GO:0045275">
    <property type="term" value="C:respiratory chain complex III"/>
    <property type="evidence" value="ECO:0007669"/>
    <property type="project" value="InterPro"/>
</dbReference>
<dbReference type="GO" id="GO:0046872">
    <property type="term" value="F:metal ion binding"/>
    <property type="evidence" value="ECO:0007669"/>
    <property type="project" value="UniProtKB-KW"/>
</dbReference>
<dbReference type="GO" id="GO:0008121">
    <property type="term" value="F:ubiquinol-cytochrome-c reductase activity"/>
    <property type="evidence" value="ECO:0007669"/>
    <property type="project" value="InterPro"/>
</dbReference>
<dbReference type="GO" id="GO:0006122">
    <property type="term" value="P:mitochondrial electron transport, ubiquinol to cytochrome c"/>
    <property type="evidence" value="ECO:0007669"/>
    <property type="project" value="TreeGrafter"/>
</dbReference>
<dbReference type="CDD" id="cd00290">
    <property type="entry name" value="cytochrome_b_C"/>
    <property type="match status" value="1"/>
</dbReference>
<dbReference type="CDD" id="cd00284">
    <property type="entry name" value="Cytochrome_b_N"/>
    <property type="match status" value="1"/>
</dbReference>
<dbReference type="FunFam" id="1.20.810.10:FF:000002">
    <property type="entry name" value="Cytochrome b"/>
    <property type="match status" value="1"/>
</dbReference>
<dbReference type="Gene3D" id="1.20.810.10">
    <property type="entry name" value="Cytochrome Bc1 Complex, Chain C"/>
    <property type="match status" value="1"/>
</dbReference>
<dbReference type="InterPro" id="IPR005798">
    <property type="entry name" value="Cyt_b/b6_C"/>
</dbReference>
<dbReference type="InterPro" id="IPR036150">
    <property type="entry name" value="Cyt_b/b6_C_sf"/>
</dbReference>
<dbReference type="InterPro" id="IPR005797">
    <property type="entry name" value="Cyt_b/b6_N"/>
</dbReference>
<dbReference type="InterPro" id="IPR027387">
    <property type="entry name" value="Cytb/b6-like_sf"/>
</dbReference>
<dbReference type="InterPro" id="IPR030689">
    <property type="entry name" value="Cytochrome_b"/>
</dbReference>
<dbReference type="InterPro" id="IPR048260">
    <property type="entry name" value="Cytochrome_b_C_euk/bac"/>
</dbReference>
<dbReference type="InterPro" id="IPR048259">
    <property type="entry name" value="Cytochrome_b_N_euk/bac"/>
</dbReference>
<dbReference type="InterPro" id="IPR016174">
    <property type="entry name" value="Di-haem_cyt_TM"/>
</dbReference>
<dbReference type="PANTHER" id="PTHR19271">
    <property type="entry name" value="CYTOCHROME B"/>
    <property type="match status" value="1"/>
</dbReference>
<dbReference type="PANTHER" id="PTHR19271:SF16">
    <property type="entry name" value="CYTOCHROME B"/>
    <property type="match status" value="1"/>
</dbReference>
<dbReference type="Pfam" id="PF00032">
    <property type="entry name" value="Cytochrom_B_C"/>
    <property type="match status" value="1"/>
</dbReference>
<dbReference type="Pfam" id="PF00033">
    <property type="entry name" value="Cytochrome_B"/>
    <property type="match status" value="1"/>
</dbReference>
<dbReference type="PIRSF" id="PIRSF038885">
    <property type="entry name" value="COB"/>
    <property type="match status" value="1"/>
</dbReference>
<dbReference type="SUPFAM" id="SSF81648">
    <property type="entry name" value="a domain/subunit of cytochrome bc1 complex (Ubiquinol-cytochrome c reductase)"/>
    <property type="match status" value="1"/>
</dbReference>
<dbReference type="SUPFAM" id="SSF81342">
    <property type="entry name" value="Transmembrane di-heme cytochromes"/>
    <property type="match status" value="1"/>
</dbReference>
<dbReference type="PROSITE" id="PS51003">
    <property type="entry name" value="CYTB_CTER"/>
    <property type="match status" value="1"/>
</dbReference>
<dbReference type="PROSITE" id="PS51002">
    <property type="entry name" value="CYTB_NTER"/>
    <property type="match status" value="1"/>
</dbReference>
<evidence type="ECO:0000250" key="1"/>
<evidence type="ECO:0000250" key="2">
    <source>
        <dbReference type="UniProtKB" id="P00157"/>
    </source>
</evidence>
<evidence type="ECO:0000255" key="3">
    <source>
        <dbReference type="PROSITE-ProRule" id="PRU00967"/>
    </source>
</evidence>
<evidence type="ECO:0000255" key="4">
    <source>
        <dbReference type="PROSITE-ProRule" id="PRU00968"/>
    </source>
</evidence>
<organism>
    <name type="scientific">Beatragus hunteri</name>
    <name type="common">Hunter's antelope</name>
    <name type="synonym">Damaliscus hunteri</name>
    <dbReference type="NCBI Taxonomy" id="59527"/>
    <lineage>
        <taxon>Eukaryota</taxon>
        <taxon>Metazoa</taxon>
        <taxon>Chordata</taxon>
        <taxon>Craniata</taxon>
        <taxon>Vertebrata</taxon>
        <taxon>Euteleostomi</taxon>
        <taxon>Mammalia</taxon>
        <taxon>Eutheria</taxon>
        <taxon>Laurasiatheria</taxon>
        <taxon>Artiodactyla</taxon>
        <taxon>Ruminantia</taxon>
        <taxon>Pecora</taxon>
        <taxon>Bovidae</taxon>
        <taxon>Alcelaphinae</taxon>
        <taxon>Beatragus</taxon>
    </lineage>
</organism>
<keyword id="KW-0249">Electron transport</keyword>
<keyword id="KW-0349">Heme</keyword>
<keyword id="KW-0408">Iron</keyword>
<keyword id="KW-0472">Membrane</keyword>
<keyword id="KW-0479">Metal-binding</keyword>
<keyword id="KW-0496">Mitochondrion</keyword>
<keyword id="KW-0999">Mitochondrion inner membrane</keyword>
<keyword id="KW-0679">Respiratory chain</keyword>
<keyword id="KW-0812">Transmembrane</keyword>
<keyword id="KW-1133">Transmembrane helix</keyword>
<keyword id="KW-0813">Transport</keyword>
<keyword id="KW-0830">Ubiquinone</keyword>
<protein>
    <recommendedName>
        <fullName>Cytochrome b</fullName>
    </recommendedName>
    <alternativeName>
        <fullName>Complex III subunit 3</fullName>
    </alternativeName>
    <alternativeName>
        <fullName>Complex III subunit III</fullName>
    </alternativeName>
    <alternativeName>
        <fullName>Cytochrome b-c1 complex subunit 3</fullName>
    </alternativeName>
    <alternativeName>
        <fullName>Ubiquinol-cytochrome-c reductase complex cytochrome b subunit</fullName>
    </alternativeName>
</protein>
<sequence>MINIRKTHPLMKIINNAFIDLPAPSNISSWWNFGSLLGICLILQILTGLFLAMHYTSDTMTAFSSVTHICRDVNYGWIIRYMHANGASMFFICLFLHVGRGLYYGSYTFLETWNIGVILLFATMATAFMGYVLPWGQMSFWGATVITNLLSAIPYIGTNLVEWIWGGFSVDKATLTRFFAFHFILPFIITALAMVHLLFLHETGSNNPTGISSDADKIPFHPYYTIKDILGALLLILALMLLVLFAPDLLGDPDNYTPANPLNTPPHIKPEWYFLFAYAILRSIPNKLGGVLALVLSILILVLMPLLHTSKQRSMMFRPISQCMFWVLVADLLTLTWIGGQPVEHPYIIIGQLASIMYFLLILVLMPMASTIENNLLKW</sequence>
<reference key="1">
    <citation type="submission" date="1997-11" db="EMBL/GenBank/DDBJ databases">
        <title>Variation in complete cytochrome b gene sequences of four antelope species.</title>
        <authorList>
            <person name="Lieckfeldt D."/>
            <person name="Pitra C."/>
        </authorList>
    </citation>
    <scope>NUCLEOTIDE SEQUENCE [GENOMIC DNA]</scope>
</reference>
<feature type="chain" id="PRO_0000060671" description="Cytochrome b">
    <location>
        <begin position="1"/>
        <end position="379"/>
    </location>
</feature>
<feature type="transmembrane region" description="Helical" evidence="2">
    <location>
        <begin position="33"/>
        <end position="53"/>
    </location>
</feature>
<feature type="transmembrane region" description="Helical" evidence="2">
    <location>
        <begin position="77"/>
        <end position="98"/>
    </location>
</feature>
<feature type="transmembrane region" description="Helical" evidence="2">
    <location>
        <begin position="113"/>
        <end position="133"/>
    </location>
</feature>
<feature type="transmembrane region" description="Helical" evidence="2">
    <location>
        <begin position="178"/>
        <end position="198"/>
    </location>
</feature>
<feature type="transmembrane region" description="Helical" evidence="2">
    <location>
        <begin position="226"/>
        <end position="246"/>
    </location>
</feature>
<feature type="transmembrane region" description="Helical" evidence="2">
    <location>
        <begin position="288"/>
        <end position="308"/>
    </location>
</feature>
<feature type="transmembrane region" description="Helical" evidence="2">
    <location>
        <begin position="320"/>
        <end position="340"/>
    </location>
</feature>
<feature type="transmembrane region" description="Helical" evidence="2">
    <location>
        <begin position="347"/>
        <end position="367"/>
    </location>
</feature>
<feature type="binding site" description="axial binding residue" evidence="2">
    <location>
        <position position="83"/>
    </location>
    <ligand>
        <name>heme b</name>
        <dbReference type="ChEBI" id="CHEBI:60344"/>
        <label>b562</label>
    </ligand>
    <ligandPart>
        <name>Fe</name>
        <dbReference type="ChEBI" id="CHEBI:18248"/>
    </ligandPart>
</feature>
<feature type="binding site" description="axial binding residue" evidence="2">
    <location>
        <position position="97"/>
    </location>
    <ligand>
        <name>heme b</name>
        <dbReference type="ChEBI" id="CHEBI:60344"/>
        <label>b566</label>
    </ligand>
    <ligandPart>
        <name>Fe</name>
        <dbReference type="ChEBI" id="CHEBI:18248"/>
    </ligandPart>
</feature>
<feature type="binding site" description="axial binding residue" evidence="2">
    <location>
        <position position="182"/>
    </location>
    <ligand>
        <name>heme b</name>
        <dbReference type="ChEBI" id="CHEBI:60344"/>
        <label>b562</label>
    </ligand>
    <ligandPart>
        <name>Fe</name>
        <dbReference type="ChEBI" id="CHEBI:18248"/>
    </ligandPart>
</feature>
<feature type="binding site" description="axial binding residue" evidence="2">
    <location>
        <position position="196"/>
    </location>
    <ligand>
        <name>heme b</name>
        <dbReference type="ChEBI" id="CHEBI:60344"/>
        <label>b566</label>
    </ligand>
    <ligandPart>
        <name>Fe</name>
        <dbReference type="ChEBI" id="CHEBI:18248"/>
    </ligandPart>
</feature>
<feature type="binding site" evidence="2">
    <location>
        <position position="201"/>
    </location>
    <ligand>
        <name>a ubiquinone</name>
        <dbReference type="ChEBI" id="CHEBI:16389"/>
    </ligand>
</feature>
<geneLocation type="mitochondrion"/>
<gene>
    <name type="primary">MT-CYB</name>
    <name type="synonym">COB</name>
    <name type="synonym">CYTB</name>
    <name type="synonym">MTCYB</name>
</gene>
<name>CYB_BEAHU</name>
<proteinExistence type="inferred from homology"/>
<accession>O47420</accession>
<comment type="function">
    <text evidence="2">Component of the ubiquinol-cytochrome c reductase complex (complex III or cytochrome b-c1 complex) that is part of the mitochondrial respiratory chain. The b-c1 complex mediates electron transfer from ubiquinol to cytochrome c. Contributes to the generation of a proton gradient across the mitochondrial membrane that is then used for ATP synthesis.</text>
</comment>
<comment type="cofactor">
    <cofactor evidence="2">
        <name>heme b</name>
        <dbReference type="ChEBI" id="CHEBI:60344"/>
    </cofactor>
    <text evidence="2">Binds 2 heme b groups non-covalently.</text>
</comment>
<comment type="subunit">
    <text evidence="2">The cytochrome bc1 complex contains 11 subunits: 3 respiratory subunits (MT-CYB, CYC1 and UQCRFS1), 2 core proteins (UQCRC1 and UQCRC2) and 6 low-molecular weight proteins (UQCRH/QCR6, UQCRB/QCR7, UQCRQ/QCR8, UQCR10/QCR9, UQCR11/QCR10 and a cleavage product of UQCRFS1). This cytochrome bc1 complex then forms a dimer.</text>
</comment>
<comment type="subcellular location">
    <subcellularLocation>
        <location evidence="2">Mitochondrion inner membrane</location>
        <topology evidence="2">Multi-pass membrane protein</topology>
    </subcellularLocation>
</comment>
<comment type="miscellaneous">
    <text evidence="1">Heme 1 (or BL or b562) is low-potential and absorbs at about 562 nm, and heme 2 (or BH or b566) is high-potential and absorbs at about 566 nm.</text>
</comment>
<comment type="similarity">
    <text evidence="3 4">Belongs to the cytochrome b family.</text>
</comment>
<comment type="caution">
    <text evidence="2">The full-length protein contains only eight transmembrane helices, not nine as predicted by bioinformatics tools.</text>
</comment>